<protein>
    <recommendedName>
        <fullName evidence="1">Histidine--tRNA ligase</fullName>
        <ecNumber evidence="1">6.1.1.21</ecNumber>
    </recommendedName>
    <alternativeName>
        <fullName evidence="1">Histidyl-tRNA synthetase</fullName>
        <shortName evidence="1">HisRS</shortName>
    </alternativeName>
</protein>
<organism>
    <name type="scientific">Methylobacillus flagellatus (strain ATCC 51484 / DSM 6875 / VKM B-1610 / KT)</name>
    <dbReference type="NCBI Taxonomy" id="265072"/>
    <lineage>
        <taxon>Bacteria</taxon>
        <taxon>Pseudomonadati</taxon>
        <taxon>Pseudomonadota</taxon>
        <taxon>Betaproteobacteria</taxon>
        <taxon>Nitrosomonadales</taxon>
        <taxon>Methylophilaceae</taxon>
        <taxon>Methylobacillus</taxon>
    </lineage>
</organism>
<dbReference type="EC" id="6.1.1.21" evidence="1"/>
<dbReference type="EMBL" id="CP000284">
    <property type="protein sequence ID" value="ABE49887.1"/>
    <property type="molecule type" value="Genomic_DNA"/>
</dbReference>
<dbReference type="RefSeq" id="WP_011479841.1">
    <property type="nucleotide sequence ID" value="NC_007947.1"/>
</dbReference>
<dbReference type="SMR" id="Q1H0V0"/>
<dbReference type="STRING" id="265072.Mfla_1619"/>
<dbReference type="KEGG" id="mfa:Mfla_1619"/>
<dbReference type="eggNOG" id="COG0124">
    <property type="taxonomic scope" value="Bacteria"/>
</dbReference>
<dbReference type="HOGENOM" id="CLU_025113_1_1_4"/>
<dbReference type="OrthoDB" id="9800814at2"/>
<dbReference type="Proteomes" id="UP000002440">
    <property type="component" value="Chromosome"/>
</dbReference>
<dbReference type="GO" id="GO:0005737">
    <property type="term" value="C:cytoplasm"/>
    <property type="evidence" value="ECO:0007669"/>
    <property type="project" value="UniProtKB-SubCell"/>
</dbReference>
<dbReference type="GO" id="GO:0005524">
    <property type="term" value="F:ATP binding"/>
    <property type="evidence" value="ECO:0007669"/>
    <property type="project" value="UniProtKB-UniRule"/>
</dbReference>
<dbReference type="GO" id="GO:0004821">
    <property type="term" value="F:histidine-tRNA ligase activity"/>
    <property type="evidence" value="ECO:0007669"/>
    <property type="project" value="UniProtKB-UniRule"/>
</dbReference>
<dbReference type="GO" id="GO:0006427">
    <property type="term" value="P:histidyl-tRNA aminoacylation"/>
    <property type="evidence" value="ECO:0007669"/>
    <property type="project" value="UniProtKB-UniRule"/>
</dbReference>
<dbReference type="CDD" id="cd00773">
    <property type="entry name" value="HisRS-like_core"/>
    <property type="match status" value="1"/>
</dbReference>
<dbReference type="CDD" id="cd00859">
    <property type="entry name" value="HisRS_anticodon"/>
    <property type="match status" value="1"/>
</dbReference>
<dbReference type="FunFam" id="3.30.930.10:FF:000005">
    <property type="entry name" value="Histidine--tRNA ligase"/>
    <property type="match status" value="1"/>
</dbReference>
<dbReference type="Gene3D" id="3.40.50.800">
    <property type="entry name" value="Anticodon-binding domain"/>
    <property type="match status" value="1"/>
</dbReference>
<dbReference type="Gene3D" id="3.30.930.10">
    <property type="entry name" value="Bira Bifunctional Protein, Domain 2"/>
    <property type="match status" value="1"/>
</dbReference>
<dbReference type="HAMAP" id="MF_00127">
    <property type="entry name" value="His_tRNA_synth"/>
    <property type="match status" value="1"/>
</dbReference>
<dbReference type="InterPro" id="IPR006195">
    <property type="entry name" value="aa-tRNA-synth_II"/>
</dbReference>
<dbReference type="InterPro" id="IPR045864">
    <property type="entry name" value="aa-tRNA-synth_II/BPL/LPL"/>
</dbReference>
<dbReference type="InterPro" id="IPR004154">
    <property type="entry name" value="Anticodon-bd"/>
</dbReference>
<dbReference type="InterPro" id="IPR036621">
    <property type="entry name" value="Anticodon-bd_dom_sf"/>
</dbReference>
<dbReference type="InterPro" id="IPR015807">
    <property type="entry name" value="His-tRNA-ligase"/>
</dbReference>
<dbReference type="InterPro" id="IPR041715">
    <property type="entry name" value="HisRS-like_core"/>
</dbReference>
<dbReference type="InterPro" id="IPR004516">
    <property type="entry name" value="HisRS/HisZ"/>
</dbReference>
<dbReference type="InterPro" id="IPR033656">
    <property type="entry name" value="HisRS_anticodon"/>
</dbReference>
<dbReference type="NCBIfam" id="TIGR00442">
    <property type="entry name" value="hisS"/>
    <property type="match status" value="1"/>
</dbReference>
<dbReference type="PANTHER" id="PTHR43707:SF1">
    <property type="entry name" value="HISTIDINE--TRNA LIGASE, MITOCHONDRIAL-RELATED"/>
    <property type="match status" value="1"/>
</dbReference>
<dbReference type="PANTHER" id="PTHR43707">
    <property type="entry name" value="HISTIDYL-TRNA SYNTHETASE"/>
    <property type="match status" value="1"/>
</dbReference>
<dbReference type="Pfam" id="PF03129">
    <property type="entry name" value="HGTP_anticodon"/>
    <property type="match status" value="1"/>
</dbReference>
<dbReference type="Pfam" id="PF13393">
    <property type="entry name" value="tRNA-synt_His"/>
    <property type="match status" value="1"/>
</dbReference>
<dbReference type="PIRSF" id="PIRSF001549">
    <property type="entry name" value="His-tRNA_synth"/>
    <property type="match status" value="1"/>
</dbReference>
<dbReference type="SUPFAM" id="SSF52954">
    <property type="entry name" value="Class II aaRS ABD-related"/>
    <property type="match status" value="1"/>
</dbReference>
<dbReference type="SUPFAM" id="SSF55681">
    <property type="entry name" value="Class II aaRS and biotin synthetases"/>
    <property type="match status" value="1"/>
</dbReference>
<dbReference type="PROSITE" id="PS50862">
    <property type="entry name" value="AA_TRNA_LIGASE_II"/>
    <property type="match status" value="1"/>
</dbReference>
<evidence type="ECO:0000255" key="1">
    <source>
        <dbReference type="HAMAP-Rule" id="MF_00127"/>
    </source>
</evidence>
<name>SYH_METFK</name>
<feature type="chain" id="PRO_1000016388" description="Histidine--tRNA ligase">
    <location>
        <begin position="1"/>
        <end position="419"/>
    </location>
</feature>
<gene>
    <name evidence="1" type="primary">hisS</name>
    <name type="ordered locus">Mfla_1619</name>
</gene>
<proteinExistence type="inferred from homology"/>
<accession>Q1H0V0</accession>
<sequence>MSDKFQSIKGFYDILPADTALWQRIEDSARQVLSQYGYRNIRLPIVEPTELFIRGVGEHTDIVEKEMYSWEDKLNGDRLTLRPEGTAGCVRAVVEHSLTYNGPQRLWYMGPMFRHENVQKGRQRQFHQIGAEAFGYTGPDVDAEQISMLARLWRELGVANEVELQLNTIGDASERAQYRQVLIRYFEQHESLLDDDAKRRLYANPLRILDSKNPAMQTMIEAAPKLLDSLGEESRAHFDGVTRQLDQLGIKWTLNTRLVRGLDYYNRTVFEWVTNKLGSQGTIAGGGRYDSLVQSLGGKETPACGFGIGLERVFLLMRECGIEAFHSPDVYLVNVGDAANKAALPIAEALRDSGLSVSLHAGGGSFKSQMKKADQSGAQYALILGDDEIAANEVCLKPLRENGEQRRMSLSQAIEALHT</sequence>
<keyword id="KW-0030">Aminoacyl-tRNA synthetase</keyword>
<keyword id="KW-0067">ATP-binding</keyword>
<keyword id="KW-0963">Cytoplasm</keyword>
<keyword id="KW-0436">Ligase</keyword>
<keyword id="KW-0547">Nucleotide-binding</keyword>
<keyword id="KW-0648">Protein biosynthesis</keyword>
<keyword id="KW-1185">Reference proteome</keyword>
<comment type="catalytic activity">
    <reaction evidence="1">
        <text>tRNA(His) + L-histidine + ATP = L-histidyl-tRNA(His) + AMP + diphosphate + H(+)</text>
        <dbReference type="Rhea" id="RHEA:17313"/>
        <dbReference type="Rhea" id="RHEA-COMP:9665"/>
        <dbReference type="Rhea" id="RHEA-COMP:9689"/>
        <dbReference type="ChEBI" id="CHEBI:15378"/>
        <dbReference type="ChEBI" id="CHEBI:30616"/>
        <dbReference type="ChEBI" id="CHEBI:33019"/>
        <dbReference type="ChEBI" id="CHEBI:57595"/>
        <dbReference type="ChEBI" id="CHEBI:78442"/>
        <dbReference type="ChEBI" id="CHEBI:78527"/>
        <dbReference type="ChEBI" id="CHEBI:456215"/>
        <dbReference type="EC" id="6.1.1.21"/>
    </reaction>
</comment>
<comment type="subunit">
    <text evidence="1">Homodimer.</text>
</comment>
<comment type="subcellular location">
    <subcellularLocation>
        <location evidence="1">Cytoplasm</location>
    </subcellularLocation>
</comment>
<comment type="similarity">
    <text evidence="1">Belongs to the class-II aminoacyl-tRNA synthetase family.</text>
</comment>
<reference key="1">
    <citation type="submission" date="2006-03" db="EMBL/GenBank/DDBJ databases">
        <title>Complete sequence of Methylobacillus flagellatus KT.</title>
        <authorList>
            <consortium name="US DOE Joint Genome Institute"/>
            <person name="Copeland A."/>
            <person name="Lucas S."/>
            <person name="Lapidus A."/>
            <person name="Barry K."/>
            <person name="Detter J.C."/>
            <person name="Glavina del Rio T."/>
            <person name="Hammon N."/>
            <person name="Israni S."/>
            <person name="Dalin E."/>
            <person name="Tice H."/>
            <person name="Pitluck S."/>
            <person name="Brettin T."/>
            <person name="Bruce D."/>
            <person name="Han C."/>
            <person name="Tapia R."/>
            <person name="Saunders E."/>
            <person name="Gilna P."/>
            <person name="Schmutz J."/>
            <person name="Larimer F."/>
            <person name="Land M."/>
            <person name="Kyrpides N."/>
            <person name="Anderson I."/>
            <person name="Richardson P."/>
        </authorList>
    </citation>
    <scope>NUCLEOTIDE SEQUENCE [LARGE SCALE GENOMIC DNA]</scope>
    <source>
        <strain>ATCC 51484 / DSM 6875 / VKM B-1610 / KT</strain>
    </source>
</reference>